<sequence>MAIKKYKPITNGRRNMTSLDFAEITKTTPEKSLLKPLPKKAGRNNQGKLTVRHHGGGHKRQYRVIDFKRNKDGINAKVDSIQYDPNRSANIALVVYADGEKRYIIAPKGLEVGQIVESGAEADIKVGNALPLQNIPVGTVVHNIELKPGKGGQIARSAGASAQVLGKEGKYVLIRLRSGEVRMILSTCRATIGQVGNLQHELVNVGKAGRSRWKGIRPTVRGSVMNPNDHPHGGGEGRAPIGRPSPMSPWGKPTLGKKTRRGKKSSDKLIVRGRKKK</sequence>
<evidence type="ECO:0000255" key="1">
    <source>
        <dbReference type="HAMAP-Rule" id="MF_01320"/>
    </source>
</evidence>
<evidence type="ECO:0000256" key="2">
    <source>
        <dbReference type="SAM" id="MobiDB-lite"/>
    </source>
</evidence>
<evidence type="ECO:0000305" key="3"/>
<protein>
    <recommendedName>
        <fullName evidence="1">Large ribosomal subunit protein uL2</fullName>
    </recommendedName>
    <alternativeName>
        <fullName evidence="3">50S ribosomal protein L2</fullName>
    </alternativeName>
</protein>
<organism>
    <name type="scientific">Staphylococcus aureus (strain N315)</name>
    <dbReference type="NCBI Taxonomy" id="158879"/>
    <lineage>
        <taxon>Bacteria</taxon>
        <taxon>Bacillati</taxon>
        <taxon>Bacillota</taxon>
        <taxon>Bacilli</taxon>
        <taxon>Bacillales</taxon>
        <taxon>Staphylococcaceae</taxon>
        <taxon>Staphylococcus</taxon>
    </lineage>
</organism>
<keyword id="KW-0687">Ribonucleoprotein</keyword>
<keyword id="KW-0689">Ribosomal protein</keyword>
<keyword id="KW-0694">RNA-binding</keyword>
<keyword id="KW-0699">rRNA-binding</keyword>
<name>RL2_STAAN</name>
<reference key="1">
    <citation type="journal article" date="2001" name="Lancet">
        <title>Whole genome sequencing of meticillin-resistant Staphylococcus aureus.</title>
        <authorList>
            <person name="Kuroda M."/>
            <person name="Ohta T."/>
            <person name="Uchiyama I."/>
            <person name="Baba T."/>
            <person name="Yuzawa H."/>
            <person name="Kobayashi I."/>
            <person name="Cui L."/>
            <person name="Oguchi A."/>
            <person name="Aoki K."/>
            <person name="Nagai Y."/>
            <person name="Lian J.-Q."/>
            <person name="Ito T."/>
            <person name="Kanamori M."/>
            <person name="Matsumaru H."/>
            <person name="Maruyama A."/>
            <person name="Murakami H."/>
            <person name="Hosoyama A."/>
            <person name="Mizutani-Ui Y."/>
            <person name="Takahashi N.K."/>
            <person name="Sawano T."/>
            <person name="Inoue R."/>
            <person name="Kaito C."/>
            <person name="Sekimizu K."/>
            <person name="Hirakawa H."/>
            <person name="Kuhara S."/>
            <person name="Goto S."/>
            <person name="Yabuzaki J."/>
            <person name="Kanehisa M."/>
            <person name="Yamashita A."/>
            <person name="Oshima K."/>
            <person name="Furuya K."/>
            <person name="Yoshino C."/>
            <person name="Shiba T."/>
            <person name="Hattori M."/>
            <person name="Ogasawara N."/>
            <person name="Hayashi H."/>
            <person name="Hiramatsu K."/>
        </authorList>
    </citation>
    <scope>NUCLEOTIDE SEQUENCE [LARGE SCALE GENOMIC DNA]</scope>
    <source>
        <strain>N315</strain>
    </source>
</reference>
<reference key="2">
    <citation type="submission" date="2005-11" db="UniProtKB">
        <title>Shotgun proteomic analysis of total protein extract of S. aureus S30 versus N315.</title>
        <authorList>
            <person name="Stenz L."/>
        </authorList>
    </citation>
    <scope>IDENTIFICATION BY MASS SPECTROMETRY</scope>
</reference>
<reference key="3">
    <citation type="submission" date="2007-10" db="UniProtKB">
        <title>Shotgun proteomic analysis of total and membrane protein extracts of S. aureus strain N315.</title>
        <authorList>
            <person name="Vaezzadeh A.R."/>
            <person name="Deshusses J."/>
            <person name="Lescuyer P."/>
            <person name="Hochstrasser D.F."/>
        </authorList>
    </citation>
    <scope>IDENTIFICATION BY MASS SPECTROMETRY [LARGE SCALE ANALYSIS]</scope>
    <source>
        <strain>N315</strain>
    </source>
</reference>
<proteinExistence type="evidence at protein level"/>
<dbReference type="EMBL" id="BA000018">
    <property type="protein sequence ID" value="BAB43339.1"/>
    <property type="molecule type" value="Genomic_DNA"/>
</dbReference>
<dbReference type="PIR" id="B90022">
    <property type="entry name" value="B90022"/>
</dbReference>
<dbReference type="RefSeq" id="WP_000985472.1">
    <property type="nucleotide sequence ID" value="NC_002745.2"/>
</dbReference>
<dbReference type="SMR" id="P60432"/>
<dbReference type="EnsemblBacteria" id="BAB43339">
    <property type="protein sequence ID" value="BAB43339"/>
    <property type="gene ID" value="BAB43339"/>
</dbReference>
<dbReference type="GeneID" id="98346559"/>
<dbReference type="KEGG" id="sau:SA2044"/>
<dbReference type="HOGENOM" id="CLU_036235_2_1_9"/>
<dbReference type="GO" id="GO:0015934">
    <property type="term" value="C:large ribosomal subunit"/>
    <property type="evidence" value="ECO:0007669"/>
    <property type="project" value="InterPro"/>
</dbReference>
<dbReference type="GO" id="GO:0019843">
    <property type="term" value="F:rRNA binding"/>
    <property type="evidence" value="ECO:0007669"/>
    <property type="project" value="UniProtKB-UniRule"/>
</dbReference>
<dbReference type="GO" id="GO:0003735">
    <property type="term" value="F:structural constituent of ribosome"/>
    <property type="evidence" value="ECO:0007669"/>
    <property type="project" value="InterPro"/>
</dbReference>
<dbReference type="GO" id="GO:0016740">
    <property type="term" value="F:transferase activity"/>
    <property type="evidence" value="ECO:0007669"/>
    <property type="project" value="InterPro"/>
</dbReference>
<dbReference type="GO" id="GO:0002181">
    <property type="term" value="P:cytoplasmic translation"/>
    <property type="evidence" value="ECO:0007669"/>
    <property type="project" value="TreeGrafter"/>
</dbReference>
<dbReference type="FunFam" id="2.30.30.30:FF:000001">
    <property type="entry name" value="50S ribosomal protein L2"/>
    <property type="match status" value="1"/>
</dbReference>
<dbReference type="FunFam" id="2.40.50.140:FF:000003">
    <property type="entry name" value="50S ribosomal protein L2"/>
    <property type="match status" value="1"/>
</dbReference>
<dbReference type="FunFam" id="4.10.950.10:FF:000001">
    <property type="entry name" value="50S ribosomal protein L2"/>
    <property type="match status" value="1"/>
</dbReference>
<dbReference type="Gene3D" id="2.30.30.30">
    <property type="match status" value="1"/>
</dbReference>
<dbReference type="Gene3D" id="2.40.50.140">
    <property type="entry name" value="Nucleic acid-binding proteins"/>
    <property type="match status" value="1"/>
</dbReference>
<dbReference type="Gene3D" id="4.10.950.10">
    <property type="entry name" value="Ribosomal protein L2, domain 3"/>
    <property type="match status" value="1"/>
</dbReference>
<dbReference type="HAMAP" id="MF_01320_B">
    <property type="entry name" value="Ribosomal_uL2_B"/>
    <property type="match status" value="1"/>
</dbReference>
<dbReference type="InterPro" id="IPR012340">
    <property type="entry name" value="NA-bd_OB-fold"/>
</dbReference>
<dbReference type="InterPro" id="IPR014722">
    <property type="entry name" value="Rib_uL2_dom2"/>
</dbReference>
<dbReference type="InterPro" id="IPR002171">
    <property type="entry name" value="Ribosomal_uL2"/>
</dbReference>
<dbReference type="InterPro" id="IPR005880">
    <property type="entry name" value="Ribosomal_uL2_bac/org-type"/>
</dbReference>
<dbReference type="InterPro" id="IPR022669">
    <property type="entry name" value="Ribosomal_uL2_C"/>
</dbReference>
<dbReference type="InterPro" id="IPR022671">
    <property type="entry name" value="Ribosomal_uL2_CS"/>
</dbReference>
<dbReference type="InterPro" id="IPR014726">
    <property type="entry name" value="Ribosomal_uL2_dom3"/>
</dbReference>
<dbReference type="InterPro" id="IPR022666">
    <property type="entry name" value="Ribosomal_uL2_RNA-bd_dom"/>
</dbReference>
<dbReference type="InterPro" id="IPR008991">
    <property type="entry name" value="Translation_prot_SH3-like_sf"/>
</dbReference>
<dbReference type="NCBIfam" id="TIGR01171">
    <property type="entry name" value="rplB_bact"/>
    <property type="match status" value="1"/>
</dbReference>
<dbReference type="PANTHER" id="PTHR13691:SF5">
    <property type="entry name" value="LARGE RIBOSOMAL SUBUNIT PROTEIN UL2M"/>
    <property type="match status" value="1"/>
</dbReference>
<dbReference type="PANTHER" id="PTHR13691">
    <property type="entry name" value="RIBOSOMAL PROTEIN L2"/>
    <property type="match status" value="1"/>
</dbReference>
<dbReference type="Pfam" id="PF00181">
    <property type="entry name" value="Ribosomal_L2"/>
    <property type="match status" value="1"/>
</dbReference>
<dbReference type="Pfam" id="PF03947">
    <property type="entry name" value="Ribosomal_L2_C"/>
    <property type="match status" value="1"/>
</dbReference>
<dbReference type="PIRSF" id="PIRSF002158">
    <property type="entry name" value="Ribosomal_L2"/>
    <property type="match status" value="1"/>
</dbReference>
<dbReference type="SMART" id="SM01383">
    <property type="entry name" value="Ribosomal_L2"/>
    <property type="match status" value="1"/>
</dbReference>
<dbReference type="SMART" id="SM01382">
    <property type="entry name" value="Ribosomal_L2_C"/>
    <property type="match status" value="1"/>
</dbReference>
<dbReference type="SUPFAM" id="SSF50249">
    <property type="entry name" value="Nucleic acid-binding proteins"/>
    <property type="match status" value="1"/>
</dbReference>
<dbReference type="SUPFAM" id="SSF50104">
    <property type="entry name" value="Translation proteins SH3-like domain"/>
    <property type="match status" value="1"/>
</dbReference>
<dbReference type="PROSITE" id="PS00467">
    <property type="entry name" value="RIBOSOMAL_L2"/>
    <property type="match status" value="1"/>
</dbReference>
<accession>P60432</accession>
<accession>Q99S24</accession>
<accession>Q9AJ03</accession>
<gene>
    <name evidence="1" type="primary">rplB</name>
    <name type="ordered locus">SA2044</name>
</gene>
<comment type="function">
    <text evidence="1">One of the primary rRNA binding proteins. Required for association of the 30S and 50S subunits to form the 70S ribosome, for tRNA binding and peptide bond formation. It has been suggested to have peptidyltransferase activity; this is somewhat controversial. Makes several contacts with the 16S rRNA in the 70S ribosome.</text>
</comment>
<comment type="subunit">
    <text evidence="1">Part of the 50S ribosomal subunit. Forms a bridge to the 30S subunit in the 70S ribosome.</text>
</comment>
<comment type="similarity">
    <text evidence="1">Belongs to the universal ribosomal protein uL2 family.</text>
</comment>
<feature type="chain" id="PRO_0000129616" description="Large ribosomal subunit protein uL2">
    <location>
        <begin position="1"/>
        <end position="277"/>
    </location>
</feature>
<feature type="region of interest" description="Disordered" evidence="2">
    <location>
        <begin position="36"/>
        <end position="55"/>
    </location>
</feature>
<feature type="region of interest" description="Disordered" evidence="2">
    <location>
        <begin position="213"/>
        <end position="277"/>
    </location>
</feature>